<evidence type="ECO:0000255" key="1">
    <source>
        <dbReference type="HAMAP-Rule" id="MF_00069"/>
    </source>
</evidence>
<organism>
    <name type="scientific">Methanocella arvoryzae (strain DSM 22066 / NBRC 105507 / MRE50)</name>
    <dbReference type="NCBI Taxonomy" id="351160"/>
    <lineage>
        <taxon>Archaea</taxon>
        <taxon>Methanobacteriati</taxon>
        <taxon>Methanobacteriota</taxon>
        <taxon>Stenosarchaea group</taxon>
        <taxon>Methanomicrobia</taxon>
        <taxon>Methanocellales</taxon>
        <taxon>Methanocellaceae</taxon>
        <taxon>Methanocella</taxon>
    </lineage>
</organism>
<feature type="chain" id="PRO_1000009178" description="Hydroxylamine reductase">
    <location>
        <begin position="1"/>
        <end position="543"/>
    </location>
</feature>
<feature type="binding site" evidence="1">
    <location>
        <position position="3"/>
    </location>
    <ligand>
        <name>[4Fe-4S] cluster</name>
        <dbReference type="ChEBI" id="CHEBI:49883"/>
    </ligand>
</feature>
<feature type="binding site" evidence="1">
    <location>
        <position position="6"/>
    </location>
    <ligand>
        <name>[4Fe-4S] cluster</name>
        <dbReference type="ChEBI" id="CHEBI:49883"/>
    </ligand>
</feature>
<feature type="binding site" evidence="1">
    <location>
        <position position="15"/>
    </location>
    <ligand>
        <name>[4Fe-4S] cluster</name>
        <dbReference type="ChEBI" id="CHEBI:49883"/>
    </ligand>
</feature>
<feature type="binding site" evidence="1">
    <location>
        <position position="21"/>
    </location>
    <ligand>
        <name>[4Fe-4S] cluster</name>
        <dbReference type="ChEBI" id="CHEBI:49883"/>
    </ligand>
</feature>
<feature type="binding site" evidence="1">
    <location>
        <position position="244"/>
    </location>
    <ligand>
        <name>hybrid [4Fe-2O-2S] cluster</name>
        <dbReference type="ChEBI" id="CHEBI:60519"/>
    </ligand>
</feature>
<feature type="binding site" evidence="1">
    <location>
        <position position="268"/>
    </location>
    <ligand>
        <name>hybrid [4Fe-2O-2S] cluster</name>
        <dbReference type="ChEBI" id="CHEBI:60519"/>
    </ligand>
</feature>
<feature type="binding site" evidence="1">
    <location>
        <position position="312"/>
    </location>
    <ligand>
        <name>hybrid [4Fe-2O-2S] cluster</name>
        <dbReference type="ChEBI" id="CHEBI:60519"/>
    </ligand>
</feature>
<feature type="binding site" description="via persulfide group" evidence="1">
    <location>
        <position position="399"/>
    </location>
    <ligand>
        <name>hybrid [4Fe-2O-2S] cluster</name>
        <dbReference type="ChEBI" id="CHEBI:60519"/>
    </ligand>
</feature>
<feature type="binding site" evidence="1">
    <location>
        <position position="427"/>
    </location>
    <ligand>
        <name>hybrid [4Fe-2O-2S] cluster</name>
        <dbReference type="ChEBI" id="CHEBI:60519"/>
    </ligand>
</feature>
<feature type="binding site" evidence="1">
    <location>
        <position position="452"/>
    </location>
    <ligand>
        <name>hybrid [4Fe-2O-2S] cluster</name>
        <dbReference type="ChEBI" id="CHEBI:60519"/>
    </ligand>
</feature>
<feature type="binding site" evidence="1">
    <location>
        <position position="486"/>
    </location>
    <ligand>
        <name>hybrid [4Fe-2O-2S] cluster</name>
        <dbReference type="ChEBI" id="CHEBI:60519"/>
    </ligand>
</feature>
<feature type="binding site" evidence="1">
    <location>
        <position position="488"/>
    </location>
    <ligand>
        <name>hybrid [4Fe-2O-2S] cluster</name>
        <dbReference type="ChEBI" id="CHEBI:60519"/>
    </ligand>
</feature>
<feature type="modified residue" description="Cysteine persulfide" evidence="1">
    <location>
        <position position="399"/>
    </location>
</feature>
<comment type="function">
    <text evidence="1">Catalyzes the reduction of hydroxylamine to form NH(3) and H(2)O.</text>
</comment>
<comment type="catalytic activity">
    <reaction evidence="1">
        <text>A + NH4(+) + H2O = hydroxylamine + AH2 + H(+)</text>
        <dbReference type="Rhea" id="RHEA:22052"/>
        <dbReference type="ChEBI" id="CHEBI:13193"/>
        <dbReference type="ChEBI" id="CHEBI:15377"/>
        <dbReference type="ChEBI" id="CHEBI:15378"/>
        <dbReference type="ChEBI" id="CHEBI:15429"/>
        <dbReference type="ChEBI" id="CHEBI:17499"/>
        <dbReference type="ChEBI" id="CHEBI:28938"/>
        <dbReference type="EC" id="1.7.99.1"/>
    </reaction>
</comment>
<comment type="cofactor">
    <cofactor evidence="1">
        <name>[4Fe-4S] cluster</name>
        <dbReference type="ChEBI" id="CHEBI:49883"/>
    </cofactor>
    <text evidence="1">Binds 1 [4Fe-4S] cluster.</text>
</comment>
<comment type="cofactor">
    <cofactor evidence="1">
        <name>hybrid [4Fe-2O-2S] cluster</name>
        <dbReference type="ChEBI" id="CHEBI:60519"/>
    </cofactor>
    <text evidence="1">Binds 1 hybrid [4Fe-2O-2S] cluster.</text>
</comment>
<comment type="subcellular location">
    <subcellularLocation>
        <location evidence="1">Cytoplasm</location>
    </subcellularLocation>
</comment>
<comment type="similarity">
    <text evidence="1">Belongs to the HCP family.</text>
</comment>
<protein>
    <recommendedName>
        <fullName evidence="1">Hydroxylamine reductase</fullName>
        <ecNumber evidence="1">1.7.99.1</ecNumber>
    </recommendedName>
    <alternativeName>
        <fullName evidence="1">Hybrid-cluster protein</fullName>
        <shortName evidence="1">HCP</shortName>
    </alternativeName>
    <alternativeName>
        <fullName evidence="1">Prismane protein</fullName>
    </alternativeName>
</protein>
<gene>
    <name evidence="1" type="primary">hcp</name>
    <name type="ordered locus">UNCMA_13170</name>
    <name type="ORF">RCIX1699</name>
</gene>
<reference key="1">
    <citation type="journal article" date="2006" name="Science">
        <title>Genome of rice cluster I archaea -- the key methane producers in the rice rhizosphere.</title>
        <authorList>
            <person name="Erkel C."/>
            <person name="Kube M."/>
            <person name="Reinhardt R."/>
            <person name="Liesack W."/>
        </authorList>
    </citation>
    <scope>NUCLEOTIDE SEQUENCE [LARGE SCALE GENOMIC DNA]</scope>
    <source>
        <strain>DSM 22066 / NBRC 105507 / MRE50</strain>
    </source>
</reference>
<dbReference type="EC" id="1.7.99.1" evidence="1"/>
<dbReference type="EMBL" id="AM114193">
    <property type="protein sequence ID" value="CAJ36920.1"/>
    <property type="molecule type" value="Genomic_DNA"/>
</dbReference>
<dbReference type="RefSeq" id="WP_012035645.1">
    <property type="nucleotide sequence ID" value="NC_009464.1"/>
</dbReference>
<dbReference type="SMR" id="Q0W3X3"/>
<dbReference type="STRING" id="351160.RCIX1699"/>
<dbReference type="GeneID" id="5144507"/>
<dbReference type="KEGG" id="rci:RCIX1699"/>
<dbReference type="PATRIC" id="fig|351160.9.peg.1358"/>
<dbReference type="eggNOG" id="arCOG02430">
    <property type="taxonomic scope" value="Archaea"/>
</dbReference>
<dbReference type="OrthoDB" id="21311at2157"/>
<dbReference type="Proteomes" id="UP000000663">
    <property type="component" value="Chromosome"/>
</dbReference>
<dbReference type="GO" id="GO:0005737">
    <property type="term" value="C:cytoplasm"/>
    <property type="evidence" value="ECO:0007669"/>
    <property type="project" value="UniProtKB-SubCell"/>
</dbReference>
<dbReference type="GO" id="GO:0051539">
    <property type="term" value="F:4 iron, 4 sulfur cluster binding"/>
    <property type="evidence" value="ECO:0007669"/>
    <property type="project" value="UniProtKB-KW"/>
</dbReference>
<dbReference type="GO" id="GO:0050418">
    <property type="term" value="F:hydroxylamine reductase activity"/>
    <property type="evidence" value="ECO:0007669"/>
    <property type="project" value="UniProtKB-UniRule"/>
</dbReference>
<dbReference type="GO" id="GO:0046872">
    <property type="term" value="F:metal ion binding"/>
    <property type="evidence" value="ECO:0007669"/>
    <property type="project" value="UniProtKB-KW"/>
</dbReference>
<dbReference type="GO" id="GO:0004601">
    <property type="term" value="F:peroxidase activity"/>
    <property type="evidence" value="ECO:0007669"/>
    <property type="project" value="TreeGrafter"/>
</dbReference>
<dbReference type="GO" id="GO:0042542">
    <property type="term" value="P:response to hydrogen peroxide"/>
    <property type="evidence" value="ECO:0007669"/>
    <property type="project" value="TreeGrafter"/>
</dbReference>
<dbReference type="CDD" id="cd01914">
    <property type="entry name" value="HCP"/>
    <property type="match status" value="1"/>
</dbReference>
<dbReference type="FunFam" id="1.20.1270.20:FF:000001">
    <property type="entry name" value="Hydroxylamine reductase"/>
    <property type="match status" value="1"/>
</dbReference>
<dbReference type="FunFam" id="3.40.50.2030:FF:000001">
    <property type="entry name" value="Hydroxylamine reductase"/>
    <property type="match status" value="1"/>
</dbReference>
<dbReference type="FunFam" id="3.40.50.2030:FF:000002">
    <property type="entry name" value="Hydroxylamine reductase"/>
    <property type="match status" value="1"/>
</dbReference>
<dbReference type="Gene3D" id="1.20.1270.20">
    <property type="match status" value="2"/>
</dbReference>
<dbReference type="Gene3D" id="3.40.50.2030">
    <property type="match status" value="2"/>
</dbReference>
<dbReference type="HAMAP" id="MF_00069">
    <property type="entry name" value="Hydroxylam_reduct"/>
    <property type="match status" value="1"/>
</dbReference>
<dbReference type="InterPro" id="IPR004137">
    <property type="entry name" value="HCP/CODH"/>
</dbReference>
<dbReference type="InterPro" id="IPR010048">
    <property type="entry name" value="Hydroxylam_reduct"/>
</dbReference>
<dbReference type="InterPro" id="IPR016099">
    <property type="entry name" value="Prismane-like_a/b-sand"/>
</dbReference>
<dbReference type="InterPro" id="IPR011254">
    <property type="entry name" value="Prismane-like_sf"/>
</dbReference>
<dbReference type="InterPro" id="IPR016100">
    <property type="entry name" value="Prismane_a-bundle"/>
</dbReference>
<dbReference type="NCBIfam" id="TIGR01703">
    <property type="entry name" value="hybrid_clust"/>
    <property type="match status" value="1"/>
</dbReference>
<dbReference type="NCBIfam" id="NF003658">
    <property type="entry name" value="PRK05290.1"/>
    <property type="match status" value="1"/>
</dbReference>
<dbReference type="PANTHER" id="PTHR30109">
    <property type="entry name" value="HYDROXYLAMINE REDUCTASE"/>
    <property type="match status" value="1"/>
</dbReference>
<dbReference type="PANTHER" id="PTHR30109:SF0">
    <property type="entry name" value="HYDROXYLAMINE REDUCTASE"/>
    <property type="match status" value="1"/>
</dbReference>
<dbReference type="Pfam" id="PF03063">
    <property type="entry name" value="Prismane"/>
    <property type="match status" value="1"/>
</dbReference>
<dbReference type="PIRSF" id="PIRSF000076">
    <property type="entry name" value="HCP"/>
    <property type="match status" value="1"/>
</dbReference>
<dbReference type="SUPFAM" id="SSF56821">
    <property type="entry name" value="Prismane protein-like"/>
    <property type="match status" value="1"/>
</dbReference>
<sequence>MFCYQCEQTAKGEGCTISGVCGKKPETAALQDLLVYSLIGLSEVAVEARLYGVVGHEYDEFTVKALFTTLTNVNFDDASLAEYINRAVVLREQLKYRLKAAGGRAEFTDAPATFKPAADLNGMIEQGRNVGLKSDVFAADENIRSLQHITLFGIKGVAAYADHAMILGQEDKKVFEFIYDGLAAMRNSKLGLNDWVGLALKCGEINIRAMELLDAGNTGTYGHPTITRVPLGAKKGKAILISGHDLKDLEMLLKQTEGKGINIYTHGEMLPAHAYPELKKYPHFYGHYGTAWQNQINEFAAFPGPIVMTTNCIQKPRDSYLGSIYTMGSVSWPGAVHIKNDNYDQVIKKALEMPGFTEDKPGKEILVGFGRNTVLSVAPAVIDAVKNKQLRHFFLVAGCDGAKPGRSYYTEFVEKVPQDCVVLTLACGKFRFFDKDMGAIGGIPRLLDVGQCNDAYSAVKIAMALADAFKVGVNDLPLSMILSWYEQKAAAILLSLLYLGIKDIRLGPSLPAFITPAVLDVLVKNFNIMPITTPEQDLKAILG</sequence>
<proteinExistence type="inferred from homology"/>
<accession>Q0W3X3</accession>
<name>HCP_METAR</name>
<keyword id="KW-0004">4Fe-4S</keyword>
<keyword id="KW-0963">Cytoplasm</keyword>
<keyword id="KW-0408">Iron</keyword>
<keyword id="KW-0411">Iron-sulfur</keyword>
<keyword id="KW-0479">Metal-binding</keyword>
<keyword id="KW-0560">Oxidoreductase</keyword>
<keyword id="KW-1185">Reference proteome</keyword>